<comment type="function">
    <text>SASP are proteins degraded in the first minutes of spore germination and provide amino acids for both new protein synthesis and metabolism. These proteins may be involved in dormant spore's high resistance to UV light.</text>
</comment>
<comment type="similarity">
    <text evidence="3">Belongs to the gamma-type SASP family.</text>
</comment>
<feature type="chain" id="PRO_0000196322" description="Small, acid-soluble spore protein gamma-type">
    <location>
        <begin position="1"/>
        <end position="54"/>
    </location>
</feature>
<feature type="region of interest" description="Disordered" evidence="2">
    <location>
        <begin position="1"/>
        <end position="54"/>
    </location>
</feature>
<feature type="compositionally biased region" description="Low complexity" evidence="2">
    <location>
        <begin position="10"/>
        <end position="21"/>
    </location>
</feature>
<feature type="compositionally biased region" description="Low complexity" evidence="2">
    <location>
        <begin position="29"/>
        <end position="44"/>
    </location>
</feature>
<feature type="compositionally biased region" description="Basic residues" evidence="2">
    <location>
        <begin position="45"/>
        <end position="54"/>
    </location>
</feature>
<feature type="site" description="Cleavage; by spore protease" evidence="1">
    <location>
        <begin position="27"/>
        <end position="28"/>
    </location>
</feature>
<name>SASG_ALKPO</name>
<dbReference type="EMBL" id="M96341">
    <property type="protein sequence ID" value="AAB01348.1"/>
    <property type="molecule type" value="Genomic_DNA"/>
</dbReference>
<dbReference type="EMBL" id="CP001878">
    <property type="protein sequence ID" value="ADC50209.1"/>
    <property type="molecule type" value="Genomic_DNA"/>
</dbReference>
<dbReference type="RefSeq" id="WP_012957575.1">
    <property type="nucleotide sequence ID" value="NC_013791.2"/>
</dbReference>
<dbReference type="SMR" id="P35142"/>
<dbReference type="STRING" id="398511.BpOF4_10780"/>
<dbReference type="KEGG" id="bpf:BpOF4_10780"/>
<dbReference type="HOGENOM" id="CLU_3040544_0_0_9"/>
<dbReference type="Proteomes" id="UP000001544">
    <property type="component" value="Chromosome"/>
</dbReference>
<dbReference type="GO" id="GO:0030435">
    <property type="term" value="P:sporulation resulting in formation of a cellular spore"/>
    <property type="evidence" value="ECO:0007669"/>
    <property type="project" value="UniProtKB-KW"/>
</dbReference>
<accession>P35142</accession>
<accession>D3FUN9</accession>
<organism>
    <name type="scientific">Alkalihalophilus pseudofirmus (strain ATCC BAA-2126 / JCM 17055 / OF4)</name>
    <name type="common">Bacillus pseudofirmus</name>
    <dbReference type="NCBI Taxonomy" id="398511"/>
    <lineage>
        <taxon>Bacteria</taxon>
        <taxon>Bacillati</taxon>
        <taxon>Bacillota</taxon>
        <taxon>Bacilli</taxon>
        <taxon>Bacillales</taxon>
        <taxon>Bacillaceae</taxon>
        <taxon>Alkalihalophilus</taxon>
    </lineage>
</organism>
<proteinExistence type="inferred from homology"/>
<reference key="1">
    <citation type="journal article" date="1993" name="Gene">
        <title>A gene encoding a small, acid-soluble spore protein from alkaliphilic Bacillus firmus OF4.</title>
        <authorList>
            <person name="Quirk P.G."/>
        </authorList>
    </citation>
    <scope>NUCLEOTIDE SEQUENCE [GENOMIC DNA]</scope>
</reference>
<reference key="2">
    <citation type="journal article" date="2011" name="Environ. Microbiol.">
        <title>Genome of alkaliphilic Bacillus pseudofirmus OF4 reveals adaptations that support the ability to grow in an external pH range from 7.5 to 11.4.</title>
        <authorList>
            <person name="Janto B."/>
            <person name="Ahmed A."/>
            <person name="Ito M."/>
            <person name="Liu J."/>
            <person name="Hicks D.B."/>
            <person name="Pagni S."/>
            <person name="Fackelmayer O.J."/>
            <person name="Smith T.A."/>
            <person name="Earl J."/>
            <person name="Elbourne L.D."/>
            <person name="Hassan K."/>
            <person name="Paulsen I.T."/>
            <person name="Kolsto A.B."/>
            <person name="Tourasse N.J."/>
            <person name="Ehrlich G.D."/>
            <person name="Boissy R."/>
            <person name="Ivey D.M."/>
            <person name="Li G."/>
            <person name="Xue Y."/>
            <person name="Ma Y."/>
            <person name="Hu F.Z."/>
            <person name="Krulwich T.A."/>
        </authorList>
    </citation>
    <scope>NUCLEOTIDE SEQUENCE [LARGE SCALE GENOMIC DNA]</scope>
    <source>
        <strain>ATCC BAA-2126 / JCM 17055 / OF4</strain>
    </source>
</reference>
<protein>
    <recommendedName>
        <fullName>Small, acid-soluble spore protein gamma-type</fullName>
        <shortName>SASP</shortName>
    </recommendedName>
</protein>
<sequence>MAKKNRNKQQQEMQQQQQQHQAEFANEFAEGSSAEQARQQQQKAAGKRQKKNQQ</sequence>
<keyword id="KW-1185">Reference proteome</keyword>
<keyword id="KW-0749">Sporulation</keyword>
<gene>
    <name type="primary">sspA</name>
    <name type="ordered locus">BpOF4_10780</name>
</gene>
<evidence type="ECO:0000250" key="1"/>
<evidence type="ECO:0000256" key="2">
    <source>
        <dbReference type="SAM" id="MobiDB-lite"/>
    </source>
</evidence>
<evidence type="ECO:0000305" key="3"/>